<comment type="function">
    <text evidence="1">Catalyzes the hydrolysis of N(2)-succinylarginine into N(2)-succinylornithine, ammonia and CO(2).</text>
</comment>
<comment type="catalytic activity">
    <reaction evidence="1">
        <text>N(2)-succinyl-L-arginine + 2 H2O + 2 H(+) = N(2)-succinyl-L-ornithine + 2 NH4(+) + CO2</text>
        <dbReference type="Rhea" id="RHEA:19533"/>
        <dbReference type="ChEBI" id="CHEBI:15377"/>
        <dbReference type="ChEBI" id="CHEBI:15378"/>
        <dbReference type="ChEBI" id="CHEBI:16526"/>
        <dbReference type="ChEBI" id="CHEBI:28938"/>
        <dbReference type="ChEBI" id="CHEBI:58241"/>
        <dbReference type="ChEBI" id="CHEBI:58514"/>
        <dbReference type="EC" id="3.5.3.23"/>
    </reaction>
</comment>
<comment type="pathway">
    <text evidence="1">Amino-acid degradation; L-arginine degradation via AST pathway; L-glutamate and succinate from L-arginine: step 2/5.</text>
</comment>
<comment type="subunit">
    <text evidence="1">Homodimer.</text>
</comment>
<comment type="similarity">
    <text evidence="1">Belongs to the succinylarginine dihydrolase family.</text>
</comment>
<dbReference type="EC" id="3.5.3.23" evidence="1"/>
<dbReference type="EMBL" id="CP000010">
    <property type="protein sequence ID" value="AAU49283.1"/>
    <property type="molecule type" value="Genomic_DNA"/>
</dbReference>
<dbReference type="RefSeq" id="WP_004192611.1">
    <property type="nucleotide sequence ID" value="NC_006348.1"/>
</dbReference>
<dbReference type="RefSeq" id="YP_102385.1">
    <property type="nucleotide sequence ID" value="NC_006348.1"/>
</dbReference>
<dbReference type="SMR" id="Q62LN4"/>
<dbReference type="GeneID" id="93060961"/>
<dbReference type="KEGG" id="bma:BMA0595"/>
<dbReference type="PATRIC" id="fig|243160.12.peg.611"/>
<dbReference type="eggNOG" id="COG3724">
    <property type="taxonomic scope" value="Bacteria"/>
</dbReference>
<dbReference type="HOGENOM" id="CLU_053835_0_0_4"/>
<dbReference type="UniPathway" id="UPA00185">
    <property type="reaction ID" value="UER00280"/>
</dbReference>
<dbReference type="Proteomes" id="UP000006693">
    <property type="component" value="Chromosome 1"/>
</dbReference>
<dbReference type="GO" id="GO:0009015">
    <property type="term" value="F:N-succinylarginine dihydrolase activity"/>
    <property type="evidence" value="ECO:0007669"/>
    <property type="project" value="UniProtKB-UniRule"/>
</dbReference>
<dbReference type="GO" id="GO:0019544">
    <property type="term" value="P:arginine catabolic process to glutamate"/>
    <property type="evidence" value="ECO:0007669"/>
    <property type="project" value="UniProtKB-UniRule"/>
</dbReference>
<dbReference type="GO" id="GO:0019545">
    <property type="term" value="P:arginine catabolic process to succinate"/>
    <property type="evidence" value="ECO:0007669"/>
    <property type="project" value="UniProtKB-UniRule"/>
</dbReference>
<dbReference type="Gene3D" id="3.75.10.20">
    <property type="entry name" value="Succinylarginine dihydrolase"/>
    <property type="match status" value="1"/>
</dbReference>
<dbReference type="HAMAP" id="MF_01172">
    <property type="entry name" value="AstB"/>
    <property type="match status" value="1"/>
</dbReference>
<dbReference type="InterPro" id="IPR037031">
    <property type="entry name" value="AstB_sf"/>
</dbReference>
<dbReference type="InterPro" id="IPR007079">
    <property type="entry name" value="SuccinylArg_d-Hdrlase_AstB"/>
</dbReference>
<dbReference type="NCBIfam" id="TIGR03241">
    <property type="entry name" value="arg_catab_astB"/>
    <property type="match status" value="1"/>
</dbReference>
<dbReference type="NCBIfam" id="NF009789">
    <property type="entry name" value="PRK13281.1"/>
    <property type="match status" value="1"/>
</dbReference>
<dbReference type="PANTHER" id="PTHR30420">
    <property type="entry name" value="N-SUCCINYLARGININE DIHYDROLASE"/>
    <property type="match status" value="1"/>
</dbReference>
<dbReference type="PANTHER" id="PTHR30420:SF2">
    <property type="entry name" value="N-SUCCINYLARGININE DIHYDROLASE"/>
    <property type="match status" value="1"/>
</dbReference>
<dbReference type="Pfam" id="PF04996">
    <property type="entry name" value="AstB"/>
    <property type="match status" value="1"/>
</dbReference>
<dbReference type="SUPFAM" id="SSF55909">
    <property type="entry name" value="Pentein"/>
    <property type="match status" value="1"/>
</dbReference>
<gene>
    <name evidence="1" type="primary">astB</name>
    <name type="ordered locus">BMA0595</name>
</gene>
<accession>Q62LN4</accession>
<evidence type="ECO:0000255" key="1">
    <source>
        <dbReference type="HAMAP-Rule" id="MF_01172"/>
    </source>
</evidence>
<reference key="1">
    <citation type="journal article" date="2004" name="Proc. Natl. Acad. Sci. U.S.A.">
        <title>Structural flexibility in the Burkholderia mallei genome.</title>
        <authorList>
            <person name="Nierman W.C."/>
            <person name="DeShazer D."/>
            <person name="Kim H.S."/>
            <person name="Tettelin H."/>
            <person name="Nelson K.E."/>
            <person name="Feldblyum T.V."/>
            <person name="Ulrich R.L."/>
            <person name="Ronning C.M."/>
            <person name="Brinkac L.M."/>
            <person name="Daugherty S.C."/>
            <person name="Davidsen T.D."/>
            <person name="DeBoy R.T."/>
            <person name="Dimitrov G."/>
            <person name="Dodson R.J."/>
            <person name="Durkin A.S."/>
            <person name="Gwinn M.L."/>
            <person name="Haft D.H."/>
            <person name="Khouri H.M."/>
            <person name="Kolonay J.F."/>
            <person name="Madupu R."/>
            <person name="Mohammoud Y."/>
            <person name="Nelson W.C."/>
            <person name="Radune D."/>
            <person name="Romero C.M."/>
            <person name="Sarria S."/>
            <person name="Selengut J."/>
            <person name="Shamblin C."/>
            <person name="Sullivan S.A."/>
            <person name="White O."/>
            <person name="Yu Y."/>
            <person name="Zafar N."/>
            <person name="Zhou L."/>
            <person name="Fraser C.M."/>
        </authorList>
    </citation>
    <scope>NUCLEOTIDE SEQUENCE [LARGE SCALE GENOMIC DNA]</scope>
    <source>
        <strain>ATCC 23344</strain>
    </source>
</reference>
<name>ASTB_BURMA</name>
<proteinExistence type="inferred from homology"/>
<protein>
    <recommendedName>
        <fullName evidence="1">N-succinylarginine dihydrolase</fullName>
        <ecNumber evidence="1">3.5.3.23</ecNumber>
    </recommendedName>
</protein>
<organism>
    <name type="scientific">Burkholderia mallei (strain ATCC 23344)</name>
    <dbReference type="NCBI Taxonomy" id="243160"/>
    <lineage>
        <taxon>Bacteria</taxon>
        <taxon>Pseudomonadati</taxon>
        <taxon>Pseudomonadota</taxon>
        <taxon>Betaproteobacteria</taxon>
        <taxon>Burkholderiales</taxon>
        <taxon>Burkholderiaceae</taxon>
        <taxon>Burkholderia</taxon>
        <taxon>pseudomallei group</taxon>
    </lineage>
</organism>
<keyword id="KW-0056">Arginine metabolism</keyword>
<keyword id="KW-0378">Hydrolase</keyword>
<keyword id="KW-1185">Reference proteome</keyword>
<sequence>MNAKEANFDGLVGPTHNYAGLSFGNVASLSNEKSDANPKAAAKQGLRKMKQLADLGFAQGVLPPQERPSLRLLRELGFSGKDADVIAKAARQAPELLAAASSASAMWTANAATVSPSADTSDARVHFTPANLCSKLHRAIEHESTRRTLAAIFADEARFAVHDALPGTPALGDEGAANHTRFCAEYGAPGVEFFVYGRAEYRRGPEPTRFPARQTFEASRAVAHRHGLREEATIYAQQRPDVIDAGVFHNDVIAVGNRDTLFCHEHAFVDRQAVYDALAASLGALGAQLNVIEVPDRAVSVADAVGSYLFNSQLLAREDGTQMLVVPQECRENANVAAYLDALVAGNGPIRDVRVFDLRESMKNGGGPACLRLRVVLNDAERAAVKPNVWIGDALFASLDAWIDKHYRDRLSPVDLADPALLDESRTALDELTQILGLGSLYDFQR</sequence>
<feature type="chain" id="PRO_0000262339" description="N-succinylarginine dihydrolase">
    <location>
        <begin position="1"/>
        <end position="446"/>
    </location>
</feature>
<feature type="active site" evidence="1">
    <location>
        <position position="174"/>
    </location>
</feature>
<feature type="active site" evidence="1">
    <location>
        <position position="249"/>
    </location>
</feature>
<feature type="active site" description="Nucleophile" evidence="1">
    <location>
        <position position="370"/>
    </location>
</feature>
<feature type="binding site" evidence="1">
    <location>
        <begin position="19"/>
        <end position="28"/>
    </location>
    <ligand>
        <name>substrate</name>
    </ligand>
</feature>
<feature type="binding site" evidence="1">
    <location>
        <position position="110"/>
    </location>
    <ligand>
        <name>substrate</name>
    </ligand>
</feature>
<feature type="binding site" evidence="1">
    <location>
        <begin position="137"/>
        <end position="138"/>
    </location>
    <ligand>
        <name>substrate</name>
    </ligand>
</feature>
<feature type="binding site" evidence="1">
    <location>
        <position position="213"/>
    </location>
    <ligand>
        <name>substrate</name>
    </ligand>
</feature>
<feature type="binding site" evidence="1">
    <location>
        <position position="251"/>
    </location>
    <ligand>
        <name>substrate</name>
    </ligand>
</feature>
<feature type="binding site" evidence="1">
    <location>
        <position position="364"/>
    </location>
    <ligand>
        <name>substrate</name>
    </ligand>
</feature>